<sequence length="422" mass="46884">MLYYLFEWLHKLNFPGAGMFGYTSFRALMAIILALLISSIWGDKFINLLKRKQITETQRDAKIDPFGVNKVGVPSMGGVIIIVAILIPCLLLGKLHNIYMILMLITTVWLGSLGFADDYIKIFKKDKEGLHGKFKIIGQVGLGLIVGLTLYLSPDVVIRENIEVQKSENEIEVIHGTHDLKSTQTTIPFFKSNNLDYADLVGFMGEHAQTAGWILFVIITIFVVTAVSNGANLNDGMDGMAAGNSAIIGLTLGILAYVSSHIEFAGYLNIMYIPGSEELVIFICAFIGALIGFLWYNAYPAQVFMGDTGSLTIGGIIAVFAIIIHKELLIPILCGIFLVENLSVLLQRFYYKAGKRKGIKQRLFKRAPIHDHFRTSMSLVEPGCSVKFTKPDQLFHESKITVRFWIVTIVLAAITIITLKIR</sequence>
<keyword id="KW-0131">Cell cycle</keyword>
<keyword id="KW-0132">Cell division</keyword>
<keyword id="KW-0997">Cell inner membrane</keyword>
<keyword id="KW-1003">Cell membrane</keyword>
<keyword id="KW-0133">Cell shape</keyword>
<keyword id="KW-0961">Cell wall biogenesis/degradation</keyword>
<keyword id="KW-0460">Magnesium</keyword>
<keyword id="KW-0472">Membrane</keyword>
<keyword id="KW-0479">Metal-binding</keyword>
<keyword id="KW-0573">Peptidoglycan synthesis</keyword>
<keyword id="KW-0808">Transferase</keyword>
<keyword id="KW-0812">Transmembrane</keyword>
<keyword id="KW-1133">Transmembrane helix</keyword>
<dbReference type="EC" id="2.7.8.13" evidence="1"/>
<dbReference type="EMBL" id="CR626927">
    <property type="protein sequence ID" value="CAH06032.1"/>
    <property type="molecule type" value="Genomic_DNA"/>
</dbReference>
<dbReference type="RefSeq" id="WP_005796732.1">
    <property type="nucleotide sequence ID" value="NZ_UFTH01000001.1"/>
</dbReference>
<dbReference type="SMR" id="Q5LIJ4"/>
<dbReference type="PaxDb" id="272559-BF9343_0253"/>
<dbReference type="GeneID" id="60368692"/>
<dbReference type="KEGG" id="bfs:BF9343_0253"/>
<dbReference type="eggNOG" id="COG0472">
    <property type="taxonomic scope" value="Bacteria"/>
</dbReference>
<dbReference type="HOGENOM" id="CLU_023982_0_0_10"/>
<dbReference type="UniPathway" id="UPA00219"/>
<dbReference type="Proteomes" id="UP000006731">
    <property type="component" value="Chromosome"/>
</dbReference>
<dbReference type="GO" id="GO:0005886">
    <property type="term" value="C:plasma membrane"/>
    <property type="evidence" value="ECO:0007669"/>
    <property type="project" value="UniProtKB-SubCell"/>
</dbReference>
<dbReference type="GO" id="GO:0046872">
    <property type="term" value="F:metal ion binding"/>
    <property type="evidence" value="ECO:0007669"/>
    <property type="project" value="UniProtKB-KW"/>
</dbReference>
<dbReference type="GO" id="GO:0008963">
    <property type="term" value="F:phospho-N-acetylmuramoyl-pentapeptide-transferase activity"/>
    <property type="evidence" value="ECO:0007669"/>
    <property type="project" value="UniProtKB-UniRule"/>
</dbReference>
<dbReference type="GO" id="GO:0051992">
    <property type="term" value="F:UDP-N-acetylmuramoyl-L-alanyl-D-glutamyl-meso-2,6-diaminopimelyl-D-alanyl-D-alanine:undecaprenyl-phosphate transferase activity"/>
    <property type="evidence" value="ECO:0007669"/>
    <property type="project" value="RHEA"/>
</dbReference>
<dbReference type="GO" id="GO:0051301">
    <property type="term" value="P:cell division"/>
    <property type="evidence" value="ECO:0007669"/>
    <property type="project" value="UniProtKB-KW"/>
</dbReference>
<dbReference type="GO" id="GO:0071555">
    <property type="term" value="P:cell wall organization"/>
    <property type="evidence" value="ECO:0007669"/>
    <property type="project" value="UniProtKB-KW"/>
</dbReference>
<dbReference type="GO" id="GO:0009252">
    <property type="term" value="P:peptidoglycan biosynthetic process"/>
    <property type="evidence" value="ECO:0007669"/>
    <property type="project" value="UniProtKB-UniRule"/>
</dbReference>
<dbReference type="GO" id="GO:0008360">
    <property type="term" value="P:regulation of cell shape"/>
    <property type="evidence" value="ECO:0007669"/>
    <property type="project" value="UniProtKB-KW"/>
</dbReference>
<dbReference type="CDD" id="cd06852">
    <property type="entry name" value="GT_MraY"/>
    <property type="match status" value="1"/>
</dbReference>
<dbReference type="HAMAP" id="MF_00038">
    <property type="entry name" value="MraY"/>
    <property type="match status" value="1"/>
</dbReference>
<dbReference type="InterPro" id="IPR000715">
    <property type="entry name" value="Glycosyl_transferase_4"/>
</dbReference>
<dbReference type="InterPro" id="IPR003524">
    <property type="entry name" value="PNAcMuramoyl-5peptid_Trfase"/>
</dbReference>
<dbReference type="InterPro" id="IPR018480">
    <property type="entry name" value="PNAcMuramoyl-5peptid_Trfase_CS"/>
</dbReference>
<dbReference type="NCBIfam" id="TIGR00445">
    <property type="entry name" value="mraY"/>
    <property type="match status" value="1"/>
</dbReference>
<dbReference type="PANTHER" id="PTHR22926">
    <property type="entry name" value="PHOSPHO-N-ACETYLMURAMOYL-PENTAPEPTIDE-TRANSFERASE"/>
    <property type="match status" value="1"/>
</dbReference>
<dbReference type="PANTHER" id="PTHR22926:SF5">
    <property type="entry name" value="PHOSPHO-N-ACETYLMURAMOYL-PENTAPEPTIDE-TRANSFERASE HOMOLOG"/>
    <property type="match status" value="1"/>
</dbReference>
<dbReference type="Pfam" id="PF00953">
    <property type="entry name" value="Glycos_transf_4"/>
    <property type="match status" value="1"/>
</dbReference>
<dbReference type="PROSITE" id="PS01347">
    <property type="entry name" value="MRAY_1"/>
    <property type="match status" value="1"/>
</dbReference>
<dbReference type="PROSITE" id="PS01348">
    <property type="entry name" value="MRAY_2"/>
    <property type="match status" value="1"/>
</dbReference>
<proteinExistence type="inferred from homology"/>
<accession>Q5LIJ4</accession>
<protein>
    <recommendedName>
        <fullName evidence="1">Phospho-N-acetylmuramoyl-pentapeptide-transferase</fullName>
        <ecNumber evidence="1">2.7.8.13</ecNumber>
    </recommendedName>
    <alternativeName>
        <fullName evidence="1">UDP-MurNAc-pentapeptide phosphotransferase</fullName>
    </alternativeName>
</protein>
<comment type="function">
    <text evidence="1">Catalyzes the initial step of the lipid cycle reactions in the biosynthesis of the cell wall peptidoglycan: transfers peptidoglycan precursor phospho-MurNAc-pentapeptide from UDP-MurNAc-pentapeptide onto the lipid carrier undecaprenyl phosphate, yielding undecaprenyl-pyrophosphoryl-MurNAc-pentapeptide, known as lipid I.</text>
</comment>
<comment type="catalytic activity">
    <reaction evidence="1">
        <text>UDP-N-acetyl-alpha-D-muramoyl-L-alanyl-gamma-D-glutamyl-meso-2,6-diaminopimeloyl-D-alanyl-D-alanine + di-trans,octa-cis-undecaprenyl phosphate = di-trans,octa-cis-undecaprenyl diphospho-N-acetyl-alpha-D-muramoyl-L-alanyl-D-glutamyl-meso-2,6-diaminopimeloyl-D-alanyl-D-alanine + UMP</text>
        <dbReference type="Rhea" id="RHEA:28386"/>
        <dbReference type="ChEBI" id="CHEBI:57865"/>
        <dbReference type="ChEBI" id="CHEBI:60392"/>
        <dbReference type="ChEBI" id="CHEBI:61386"/>
        <dbReference type="ChEBI" id="CHEBI:61387"/>
        <dbReference type="EC" id="2.7.8.13"/>
    </reaction>
</comment>
<comment type="cofactor">
    <cofactor evidence="1">
        <name>Mg(2+)</name>
        <dbReference type="ChEBI" id="CHEBI:18420"/>
    </cofactor>
</comment>
<comment type="pathway">
    <text evidence="1">Cell wall biogenesis; peptidoglycan biosynthesis.</text>
</comment>
<comment type="subcellular location">
    <subcellularLocation>
        <location evidence="1">Cell inner membrane</location>
        <topology evidence="1">Multi-pass membrane protein</topology>
    </subcellularLocation>
</comment>
<comment type="similarity">
    <text evidence="1">Belongs to the glycosyltransferase 4 family. MraY subfamily.</text>
</comment>
<name>MRAY_BACFN</name>
<evidence type="ECO:0000255" key="1">
    <source>
        <dbReference type="HAMAP-Rule" id="MF_00038"/>
    </source>
</evidence>
<gene>
    <name evidence="1" type="primary">mraY</name>
    <name type="ordered locus">BF0257</name>
</gene>
<feature type="chain" id="PRO_0000235437" description="Phospho-N-acetylmuramoyl-pentapeptide-transferase">
    <location>
        <begin position="1"/>
        <end position="422"/>
    </location>
</feature>
<feature type="transmembrane region" description="Helical" evidence="1">
    <location>
        <begin position="28"/>
        <end position="48"/>
    </location>
</feature>
<feature type="transmembrane region" description="Helical" evidence="1">
    <location>
        <begin position="71"/>
        <end position="91"/>
    </location>
</feature>
<feature type="transmembrane region" description="Helical" evidence="1">
    <location>
        <begin position="95"/>
        <end position="115"/>
    </location>
</feature>
<feature type="transmembrane region" description="Helical" evidence="1">
    <location>
        <begin position="136"/>
        <end position="156"/>
    </location>
</feature>
<feature type="transmembrane region" description="Helical" evidence="1">
    <location>
        <begin position="211"/>
        <end position="231"/>
    </location>
</feature>
<feature type="transmembrane region" description="Helical" evidence="1">
    <location>
        <begin position="246"/>
        <end position="266"/>
    </location>
</feature>
<feature type="transmembrane region" description="Helical" evidence="1">
    <location>
        <begin position="279"/>
        <end position="299"/>
    </location>
</feature>
<feature type="transmembrane region" description="Helical" evidence="1">
    <location>
        <begin position="313"/>
        <end position="333"/>
    </location>
</feature>
<feature type="transmembrane region" description="Helical" evidence="1">
    <location>
        <begin position="399"/>
        <end position="419"/>
    </location>
</feature>
<reference key="1">
    <citation type="journal article" date="2005" name="Science">
        <title>Extensive DNA inversions in the B. fragilis genome control variable gene expression.</title>
        <authorList>
            <person name="Cerdeno-Tarraga A.-M."/>
            <person name="Patrick S."/>
            <person name="Crossman L.C."/>
            <person name="Blakely G."/>
            <person name="Abratt V."/>
            <person name="Lennard N."/>
            <person name="Poxton I."/>
            <person name="Duerden B."/>
            <person name="Harris B."/>
            <person name="Quail M.A."/>
            <person name="Barron A."/>
            <person name="Clark L."/>
            <person name="Corton C."/>
            <person name="Doggett J."/>
            <person name="Holden M.T.G."/>
            <person name="Larke N."/>
            <person name="Line A."/>
            <person name="Lord A."/>
            <person name="Norbertczak H."/>
            <person name="Ormond D."/>
            <person name="Price C."/>
            <person name="Rabbinowitsch E."/>
            <person name="Woodward J."/>
            <person name="Barrell B.G."/>
            <person name="Parkhill J."/>
        </authorList>
    </citation>
    <scope>NUCLEOTIDE SEQUENCE [LARGE SCALE GENOMIC DNA]</scope>
    <source>
        <strain>ATCC 25285 / DSM 2151 / CCUG 4856 / JCM 11019 / LMG 10263 / NCTC 9343 / Onslow / VPI 2553 / EN-2</strain>
    </source>
</reference>
<organism>
    <name type="scientific">Bacteroides fragilis (strain ATCC 25285 / DSM 2151 / CCUG 4856 / JCM 11019 / LMG 10263 / NCTC 9343 / Onslow / VPI 2553 / EN-2)</name>
    <dbReference type="NCBI Taxonomy" id="272559"/>
    <lineage>
        <taxon>Bacteria</taxon>
        <taxon>Pseudomonadati</taxon>
        <taxon>Bacteroidota</taxon>
        <taxon>Bacteroidia</taxon>
        <taxon>Bacteroidales</taxon>
        <taxon>Bacteroidaceae</taxon>
        <taxon>Bacteroides</taxon>
    </lineage>
</organism>